<dbReference type="EC" id="3.1.3.5" evidence="1"/>
<dbReference type="EC" id="3.1.3.6" evidence="1"/>
<dbReference type="EC" id="3.6.1.11" evidence="1"/>
<dbReference type="EMBL" id="CP000468">
    <property type="protein sequence ID" value="ABJ02178.1"/>
    <property type="molecule type" value="Genomic_DNA"/>
</dbReference>
<dbReference type="RefSeq" id="WP_001295182.1">
    <property type="nucleotide sequence ID" value="NZ_CADILS010000024.1"/>
</dbReference>
<dbReference type="SMR" id="A1AET8"/>
<dbReference type="GeneID" id="93779262"/>
<dbReference type="KEGG" id="ecv:APECO1_3779"/>
<dbReference type="HOGENOM" id="CLU_045192_1_2_6"/>
<dbReference type="Proteomes" id="UP000008216">
    <property type="component" value="Chromosome"/>
</dbReference>
<dbReference type="GO" id="GO:0005737">
    <property type="term" value="C:cytoplasm"/>
    <property type="evidence" value="ECO:0007669"/>
    <property type="project" value="UniProtKB-SubCell"/>
</dbReference>
<dbReference type="GO" id="GO:0008254">
    <property type="term" value="F:3'-nucleotidase activity"/>
    <property type="evidence" value="ECO:0007669"/>
    <property type="project" value="UniProtKB-UniRule"/>
</dbReference>
<dbReference type="GO" id="GO:0008253">
    <property type="term" value="F:5'-nucleotidase activity"/>
    <property type="evidence" value="ECO:0007669"/>
    <property type="project" value="UniProtKB-UniRule"/>
</dbReference>
<dbReference type="GO" id="GO:0004309">
    <property type="term" value="F:exopolyphosphatase activity"/>
    <property type="evidence" value="ECO:0007669"/>
    <property type="project" value="UniProtKB-UniRule"/>
</dbReference>
<dbReference type="GO" id="GO:0046872">
    <property type="term" value="F:metal ion binding"/>
    <property type="evidence" value="ECO:0007669"/>
    <property type="project" value="UniProtKB-UniRule"/>
</dbReference>
<dbReference type="GO" id="GO:0000166">
    <property type="term" value="F:nucleotide binding"/>
    <property type="evidence" value="ECO:0007669"/>
    <property type="project" value="UniProtKB-KW"/>
</dbReference>
<dbReference type="FunFam" id="3.40.1210.10:FF:000001">
    <property type="entry name" value="5'/3'-nucleotidase SurE"/>
    <property type="match status" value="1"/>
</dbReference>
<dbReference type="Gene3D" id="3.40.1210.10">
    <property type="entry name" value="Survival protein SurE-like phosphatase/nucleotidase"/>
    <property type="match status" value="1"/>
</dbReference>
<dbReference type="HAMAP" id="MF_00060">
    <property type="entry name" value="SurE"/>
    <property type="match status" value="1"/>
</dbReference>
<dbReference type="InterPro" id="IPR030048">
    <property type="entry name" value="SurE"/>
</dbReference>
<dbReference type="InterPro" id="IPR002828">
    <property type="entry name" value="SurE-like_Pase/nucleotidase"/>
</dbReference>
<dbReference type="InterPro" id="IPR036523">
    <property type="entry name" value="SurE-like_sf"/>
</dbReference>
<dbReference type="NCBIfam" id="NF001488">
    <property type="entry name" value="PRK00346.1-1"/>
    <property type="match status" value="1"/>
</dbReference>
<dbReference type="NCBIfam" id="NF001489">
    <property type="entry name" value="PRK00346.1-3"/>
    <property type="match status" value="1"/>
</dbReference>
<dbReference type="NCBIfam" id="NF001490">
    <property type="entry name" value="PRK00346.1-4"/>
    <property type="match status" value="1"/>
</dbReference>
<dbReference type="NCBIfam" id="TIGR00087">
    <property type="entry name" value="surE"/>
    <property type="match status" value="1"/>
</dbReference>
<dbReference type="PANTHER" id="PTHR30457">
    <property type="entry name" value="5'-NUCLEOTIDASE SURE"/>
    <property type="match status" value="1"/>
</dbReference>
<dbReference type="PANTHER" id="PTHR30457:SF12">
    <property type="entry name" value="5'_3'-NUCLEOTIDASE SURE"/>
    <property type="match status" value="1"/>
</dbReference>
<dbReference type="Pfam" id="PF01975">
    <property type="entry name" value="SurE"/>
    <property type="match status" value="1"/>
</dbReference>
<dbReference type="SUPFAM" id="SSF64167">
    <property type="entry name" value="SurE-like"/>
    <property type="match status" value="1"/>
</dbReference>
<comment type="function">
    <text evidence="1">Nucleotidase with a broad substrate specificity as it can dephosphorylate various ribo- and deoxyribonucleoside 5'-monophosphates and ribonucleoside 3'-monophosphates with highest affinity to 3'-AMP. Also hydrolyzes polyphosphate (exopolyphosphatase activity) with the preference for short-chain-length substrates (P20-25). Might be involved in the regulation of dNTP and NTP pools, and in the turnover of 3'-mononucleotides produced by numerous intracellular RNases (T1, T2, and F) during the degradation of various RNAs.</text>
</comment>
<comment type="catalytic activity">
    <reaction evidence="1">
        <text>a ribonucleoside 5'-phosphate + H2O = a ribonucleoside + phosphate</text>
        <dbReference type="Rhea" id="RHEA:12484"/>
        <dbReference type="ChEBI" id="CHEBI:15377"/>
        <dbReference type="ChEBI" id="CHEBI:18254"/>
        <dbReference type="ChEBI" id="CHEBI:43474"/>
        <dbReference type="ChEBI" id="CHEBI:58043"/>
        <dbReference type="EC" id="3.1.3.5"/>
    </reaction>
</comment>
<comment type="catalytic activity">
    <reaction evidence="1">
        <text>a ribonucleoside 3'-phosphate + H2O = a ribonucleoside + phosphate</text>
        <dbReference type="Rhea" id="RHEA:10144"/>
        <dbReference type="ChEBI" id="CHEBI:13197"/>
        <dbReference type="ChEBI" id="CHEBI:15377"/>
        <dbReference type="ChEBI" id="CHEBI:18254"/>
        <dbReference type="ChEBI" id="CHEBI:43474"/>
        <dbReference type="EC" id="3.1.3.6"/>
    </reaction>
</comment>
<comment type="catalytic activity">
    <reaction evidence="1">
        <text>[phosphate](n) + H2O = [phosphate](n-1) + phosphate + H(+)</text>
        <dbReference type="Rhea" id="RHEA:21528"/>
        <dbReference type="Rhea" id="RHEA-COMP:9859"/>
        <dbReference type="Rhea" id="RHEA-COMP:14279"/>
        <dbReference type="ChEBI" id="CHEBI:15377"/>
        <dbReference type="ChEBI" id="CHEBI:15378"/>
        <dbReference type="ChEBI" id="CHEBI:16838"/>
        <dbReference type="ChEBI" id="CHEBI:43474"/>
        <dbReference type="EC" id="3.6.1.11"/>
    </reaction>
</comment>
<comment type="cofactor">
    <cofactor evidence="1">
        <name>a divalent metal cation</name>
        <dbReference type="ChEBI" id="CHEBI:60240"/>
    </cofactor>
    <text evidence="1">Binds 1 divalent metal cation per subunit.</text>
</comment>
<comment type="subcellular location">
    <subcellularLocation>
        <location evidence="1">Cytoplasm</location>
    </subcellularLocation>
</comment>
<comment type="similarity">
    <text evidence="1">Belongs to the SurE nucleotidase family.</text>
</comment>
<organism>
    <name type="scientific">Escherichia coli O1:K1 / APEC</name>
    <dbReference type="NCBI Taxonomy" id="405955"/>
    <lineage>
        <taxon>Bacteria</taxon>
        <taxon>Pseudomonadati</taxon>
        <taxon>Pseudomonadota</taxon>
        <taxon>Gammaproteobacteria</taxon>
        <taxon>Enterobacterales</taxon>
        <taxon>Enterobacteriaceae</taxon>
        <taxon>Escherichia</taxon>
    </lineage>
</organism>
<evidence type="ECO:0000255" key="1">
    <source>
        <dbReference type="HAMAP-Rule" id="MF_00060"/>
    </source>
</evidence>
<gene>
    <name evidence="1" type="primary">surE</name>
    <name type="ordered locus">Ecok1_26840</name>
    <name type="ORF">APECO1_3779</name>
</gene>
<protein>
    <recommendedName>
        <fullName evidence="1">5'/3'-nucleotidase SurE</fullName>
        <ecNumber evidence="1">3.1.3.5</ecNumber>
        <ecNumber evidence="1">3.1.3.6</ecNumber>
    </recommendedName>
    <alternativeName>
        <fullName evidence="1">Exopolyphosphatase</fullName>
        <ecNumber evidence="1">3.6.1.11</ecNumber>
    </alternativeName>
    <alternativeName>
        <fullName evidence="1">Nucleoside monophosphate phosphohydrolase</fullName>
    </alternativeName>
</protein>
<sequence>MRILLSNDDGVHAPGIQTLAKALREFADVQVVAPDRNRSGASNSLTLESSLRTFTFENGDIAVQMGTPTDCVYLGVNALMRPRPDIVVSGINAGPNLGDDVIYSGTVAAAMEGRHLGFPALAVSLDGHKHYDTAAAVTCSILRALCKEPLRTGRILNINVPDLPLDQIKGIRVTRCGTRHPADQVIPQQDPRGNTLYWIGPPGGKCDAGPGTDFAAVDEGYVSITPLHVDLTAHSAQDVVSDWLNSVGVGTQW</sequence>
<feature type="chain" id="PRO_1000007727" description="5'/3'-nucleotidase SurE">
    <location>
        <begin position="1"/>
        <end position="253"/>
    </location>
</feature>
<feature type="binding site" evidence="1">
    <location>
        <position position="8"/>
    </location>
    <ligand>
        <name>a divalent metal cation</name>
        <dbReference type="ChEBI" id="CHEBI:60240"/>
    </ligand>
</feature>
<feature type="binding site" evidence="1">
    <location>
        <position position="9"/>
    </location>
    <ligand>
        <name>a divalent metal cation</name>
        <dbReference type="ChEBI" id="CHEBI:60240"/>
    </ligand>
</feature>
<feature type="binding site" evidence="1">
    <location>
        <position position="39"/>
    </location>
    <ligand>
        <name>a divalent metal cation</name>
        <dbReference type="ChEBI" id="CHEBI:60240"/>
    </ligand>
</feature>
<feature type="binding site" evidence="1">
    <location>
        <position position="92"/>
    </location>
    <ligand>
        <name>a divalent metal cation</name>
        <dbReference type="ChEBI" id="CHEBI:60240"/>
    </ligand>
</feature>
<accession>A1AET8</accession>
<reference key="1">
    <citation type="journal article" date="2007" name="J. Bacteriol.">
        <title>The genome sequence of avian pathogenic Escherichia coli strain O1:K1:H7 shares strong similarities with human extraintestinal pathogenic E. coli genomes.</title>
        <authorList>
            <person name="Johnson T.J."/>
            <person name="Kariyawasam S."/>
            <person name="Wannemuehler Y."/>
            <person name="Mangiamele P."/>
            <person name="Johnson S.J."/>
            <person name="Doetkott C."/>
            <person name="Skyberg J.A."/>
            <person name="Lynne A.M."/>
            <person name="Johnson J.R."/>
            <person name="Nolan L.K."/>
        </authorList>
    </citation>
    <scope>NUCLEOTIDE SEQUENCE [LARGE SCALE GENOMIC DNA]</scope>
</reference>
<keyword id="KW-0963">Cytoplasm</keyword>
<keyword id="KW-0378">Hydrolase</keyword>
<keyword id="KW-0479">Metal-binding</keyword>
<keyword id="KW-0547">Nucleotide-binding</keyword>
<keyword id="KW-1185">Reference proteome</keyword>
<proteinExistence type="inferred from homology"/>
<name>SURE_ECOK1</name>